<comment type="function">
    <text evidence="1">Directs the termination of nascent peptide synthesis (translation) in response to the termination codons UAA, UAG and UGA.</text>
</comment>
<comment type="subunit">
    <text evidence="1">Heterodimer of two subunits, one of which binds GTP.</text>
</comment>
<comment type="subcellular location">
    <subcellularLocation>
        <location evidence="1">Cytoplasm</location>
    </subcellularLocation>
</comment>
<comment type="similarity">
    <text evidence="1">Belongs to the eukaryotic release factor 1 family.</text>
</comment>
<organism>
    <name type="scientific">Methanosarcina acetivorans (strain ATCC 35395 / DSM 2834 / JCM 12185 / C2A)</name>
    <dbReference type="NCBI Taxonomy" id="188937"/>
    <lineage>
        <taxon>Archaea</taxon>
        <taxon>Methanobacteriati</taxon>
        <taxon>Methanobacteriota</taxon>
        <taxon>Stenosarchaea group</taxon>
        <taxon>Methanomicrobia</taxon>
        <taxon>Methanosarcinales</taxon>
        <taxon>Methanosarcinaceae</taxon>
        <taxon>Methanosarcina</taxon>
    </lineage>
</organism>
<keyword id="KW-0963">Cytoplasm</keyword>
<keyword id="KW-0648">Protein biosynthesis</keyword>
<keyword id="KW-1185">Reference proteome</keyword>
<reference key="1">
    <citation type="journal article" date="2002" name="Genome Res.">
        <title>The genome of Methanosarcina acetivorans reveals extensive metabolic and physiological diversity.</title>
        <authorList>
            <person name="Galagan J.E."/>
            <person name="Nusbaum C."/>
            <person name="Roy A."/>
            <person name="Endrizzi M.G."/>
            <person name="Macdonald P."/>
            <person name="FitzHugh W."/>
            <person name="Calvo S."/>
            <person name="Engels R."/>
            <person name="Smirnov S."/>
            <person name="Atnoor D."/>
            <person name="Brown A."/>
            <person name="Allen N."/>
            <person name="Naylor J."/>
            <person name="Stange-Thomann N."/>
            <person name="DeArellano K."/>
            <person name="Johnson R."/>
            <person name="Linton L."/>
            <person name="McEwan P."/>
            <person name="McKernan K."/>
            <person name="Talamas J."/>
            <person name="Tirrell A."/>
            <person name="Ye W."/>
            <person name="Zimmer A."/>
            <person name="Barber R.D."/>
            <person name="Cann I."/>
            <person name="Graham D.E."/>
            <person name="Grahame D.A."/>
            <person name="Guss A.M."/>
            <person name="Hedderich R."/>
            <person name="Ingram-Smith C."/>
            <person name="Kuettner H.C."/>
            <person name="Krzycki J.A."/>
            <person name="Leigh J.A."/>
            <person name="Li W."/>
            <person name="Liu J."/>
            <person name="Mukhopadhyay B."/>
            <person name="Reeve J.N."/>
            <person name="Smith K."/>
            <person name="Springer T.A."/>
            <person name="Umayam L.A."/>
            <person name="White O."/>
            <person name="White R.H."/>
            <person name="de Macario E.C."/>
            <person name="Ferry J.G."/>
            <person name="Jarrell K.F."/>
            <person name="Jing H."/>
            <person name="Macario A.J.L."/>
            <person name="Paulsen I.T."/>
            <person name="Pritchett M."/>
            <person name="Sowers K.R."/>
            <person name="Swanson R.V."/>
            <person name="Zinder S.H."/>
            <person name="Lander E."/>
            <person name="Metcalf W.W."/>
            <person name="Birren B."/>
        </authorList>
    </citation>
    <scope>NUCLEOTIDE SEQUENCE [LARGE SCALE GENOMIC DNA]</scope>
    <source>
        <strain>ATCC 35395 / DSM 2834 / JCM 12185 / C2A</strain>
    </source>
</reference>
<sequence>MTEQSAHEKYEFKKKLESLRDKKGRSTELISLYIPADKQIFDVTNQLKDEHGQAANIKSKLTRTNVQGAIESLLSRLRYLDKVPENGIVYFTGAVDIGANKTSMESEVIIPPEPITVYKYHCDSSFYLEPLEDMLKDKSTFGLLVLDRREATIGLLVGKRIQAFRNLTSTVPGKQRKGGQSAHRFQQLRLIAIHDFYKRIGDAASEIFMAVDHKDLKGVLIGGPSPTKEEFYGGEFLHHELQKKILGLFDTAYTDESGLSELVNAAGEKLQDLELMGQKNAVRDFFKELIADSGKVAYGETQVRANLEINAVDVLLLSEDLRAERVTTKCSVCGYENKWTRRWKPGEPAPTAGNCPKCGSSLEVTDVIDVVDEFSELADKSNAKVVFVSTDFDEGSQLMNAFGGIAAILRYSTGV</sequence>
<protein>
    <recommendedName>
        <fullName evidence="1">Peptide chain release factor subunit 1-1</fullName>
    </recommendedName>
    <alternativeName>
        <fullName evidence="1">Translation termination factor aRF1 1</fullName>
    </alternativeName>
</protein>
<feature type="chain" id="PRO_0000143172" description="Peptide chain release factor subunit 1-1">
    <location>
        <begin position="1"/>
        <end position="415"/>
    </location>
</feature>
<gene>
    <name evidence="1" type="primary">prf11</name>
    <name type="synonym">erf1</name>
    <name type="ordered locus">MA_0042</name>
</gene>
<name>RF11_METAC</name>
<accession>Q8TUM4</accession>
<evidence type="ECO:0000255" key="1">
    <source>
        <dbReference type="HAMAP-Rule" id="MF_00424"/>
    </source>
</evidence>
<proteinExistence type="inferred from homology"/>
<dbReference type="EMBL" id="AE010299">
    <property type="protein sequence ID" value="AAM03496.1"/>
    <property type="molecule type" value="Genomic_DNA"/>
</dbReference>
<dbReference type="RefSeq" id="WP_011020101.1">
    <property type="nucleotide sequence ID" value="NC_003552.1"/>
</dbReference>
<dbReference type="SMR" id="Q8TUM4"/>
<dbReference type="FunCoup" id="Q8TUM4">
    <property type="interactions" value="228"/>
</dbReference>
<dbReference type="STRING" id="188937.MA_0042"/>
<dbReference type="EnsemblBacteria" id="AAM03496">
    <property type="protein sequence ID" value="AAM03496"/>
    <property type="gene ID" value="MA_0042"/>
</dbReference>
<dbReference type="GeneID" id="1471934"/>
<dbReference type="KEGG" id="mac:MA_0042"/>
<dbReference type="HOGENOM" id="CLU_035759_3_0_2"/>
<dbReference type="InParanoid" id="Q8TUM4"/>
<dbReference type="OrthoDB" id="1011at2157"/>
<dbReference type="PhylomeDB" id="Q8TUM4"/>
<dbReference type="Proteomes" id="UP000002487">
    <property type="component" value="Chromosome"/>
</dbReference>
<dbReference type="GO" id="GO:0005829">
    <property type="term" value="C:cytosol"/>
    <property type="evidence" value="ECO:0000318"/>
    <property type="project" value="GO_Central"/>
</dbReference>
<dbReference type="GO" id="GO:0018444">
    <property type="term" value="C:translation release factor complex"/>
    <property type="evidence" value="ECO:0000318"/>
    <property type="project" value="GO_Central"/>
</dbReference>
<dbReference type="GO" id="GO:1990825">
    <property type="term" value="F:sequence-specific mRNA binding"/>
    <property type="evidence" value="ECO:0000318"/>
    <property type="project" value="GO_Central"/>
</dbReference>
<dbReference type="GO" id="GO:0016149">
    <property type="term" value="F:translation release factor activity, codon specific"/>
    <property type="evidence" value="ECO:0000318"/>
    <property type="project" value="GO_Central"/>
</dbReference>
<dbReference type="FunFam" id="1.20.5.170:FF:000115">
    <property type="entry name" value="Peptide chain release factor subunit 1"/>
    <property type="match status" value="1"/>
</dbReference>
<dbReference type="FunFam" id="3.30.1330.30:FF:000057">
    <property type="entry name" value="Peptide chain release factor subunit 1"/>
    <property type="match status" value="1"/>
</dbReference>
<dbReference type="FunFam" id="3.30.420.60:FF:000003">
    <property type="entry name" value="Peptide chain release factor subunit 1"/>
    <property type="match status" value="1"/>
</dbReference>
<dbReference type="FunFam" id="3.30.960.10:FF:000003">
    <property type="entry name" value="Peptide chain release factor subunit 1"/>
    <property type="match status" value="1"/>
</dbReference>
<dbReference type="Gene3D" id="1.20.5.170">
    <property type="match status" value="1"/>
</dbReference>
<dbReference type="Gene3D" id="3.30.1330.30">
    <property type="match status" value="1"/>
</dbReference>
<dbReference type="Gene3D" id="3.30.960.10">
    <property type="entry name" value="eRF1 domain 1"/>
    <property type="match status" value="1"/>
</dbReference>
<dbReference type="Gene3D" id="3.30.420.60">
    <property type="entry name" value="eRF1 domain 2"/>
    <property type="match status" value="1"/>
</dbReference>
<dbReference type="HAMAP" id="MF_00424">
    <property type="entry name" value="Rel_fact_arch_1"/>
    <property type="match status" value="1"/>
</dbReference>
<dbReference type="InterPro" id="IPR042226">
    <property type="entry name" value="eFR1_2_sf"/>
</dbReference>
<dbReference type="InterPro" id="IPR005140">
    <property type="entry name" value="eRF1_1_Pelota"/>
</dbReference>
<dbReference type="InterPro" id="IPR024049">
    <property type="entry name" value="eRF1_1_sf"/>
</dbReference>
<dbReference type="InterPro" id="IPR005141">
    <property type="entry name" value="eRF1_2"/>
</dbReference>
<dbReference type="InterPro" id="IPR005142">
    <property type="entry name" value="eRF1_3"/>
</dbReference>
<dbReference type="InterPro" id="IPR020918">
    <property type="entry name" value="Peptide_chain-rel_aRF1"/>
</dbReference>
<dbReference type="InterPro" id="IPR004403">
    <property type="entry name" value="Peptide_chain-rel_eRF1/aRF1"/>
</dbReference>
<dbReference type="InterPro" id="IPR029064">
    <property type="entry name" value="Ribosomal_eL30-like_sf"/>
</dbReference>
<dbReference type="NCBIfam" id="TIGR03676">
    <property type="entry name" value="aRF1_eRF1"/>
    <property type="match status" value="1"/>
</dbReference>
<dbReference type="PANTHER" id="PTHR10113">
    <property type="entry name" value="PEPTIDE CHAIN RELEASE FACTOR SUBUNIT 1"/>
    <property type="match status" value="1"/>
</dbReference>
<dbReference type="Pfam" id="PF03463">
    <property type="entry name" value="eRF1_1"/>
    <property type="match status" value="1"/>
</dbReference>
<dbReference type="Pfam" id="PF03464">
    <property type="entry name" value="eRF1_2"/>
    <property type="match status" value="1"/>
</dbReference>
<dbReference type="Pfam" id="PF03465">
    <property type="entry name" value="eRF1_3"/>
    <property type="match status" value="1"/>
</dbReference>
<dbReference type="SMART" id="SM01194">
    <property type="entry name" value="eRF1_1"/>
    <property type="match status" value="1"/>
</dbReference>
<dbReference type="SUPFAM" id="SSF55315">
    <property type="entry name" value="L30e-like"/>
    <property type="match status" value="1"/>
</dbReference>
<dbReference type="SUPFAM" id="SSF55481">
    <property type="entry name" value="N-terminal domain of eukaryotic peptide chain release factor subunit 1, ERF1"/>
    <property type="match status" value="1"/>
</dbReference>
<dbReference type="SUPFAM" id="SSF53137">
    <property type="entry name" value="Translational machinery components"/>
    <property type="match status" value="1"/>
</dbReference>